<reference key="1">
    <citation type="journal article" date="1983" name="Cell">
        <title>cA lectin gene insertion has the structural features of a transposable element.</title>
        <authorList>
            <person name="Vodkin L.O."/>
            <person name="Rhodes P.R."/>
            <person name="Goldberg R.B."/>
        </authorList>
    </citation>
    <scope>NUCLEOTIDE SEQUENCE [GENOMIC DNA]</scope>
</reference>
<reference key="2">
    <citation type="journal article" date="1995" name="Biochemistry">
        <title>X-ray crystal structure of the soybean agglutinin cross-linked with a biantennary analog of the blood group I carbohydrate antigen.</title>
        <authorList>
            <person name="Dessen A."/>
            <person name="Gupta D."/>
            <person name="Sabesan S."/>
            <person name="Brewer C.F."/>
            <person name="Sacchettini J.C."/>
        </authorList>
    </citation>
    <scope>X-RAY CRYSTALLOGRAPHY (2.6 ANGSTROMS)</scope>
</reference>
<reference key="3">
    <citation type="journal article" date="1997" name="Biochemistry">
        <title>X-ray crystallographic studies of unique cross-linked lattices between four isomeric biantennary oligosaccharides and soybean agglutinin.</title>
        <authorList>
            <person name="Olsen L.R."/>
            <person name="Dessen A."/>
            <person name="Gupta D."/>
            <person name="Sabesan S."/>
            <person name="Sacchettini J.C."/>
            <person name="Brewer C.F."/>
        </authorList>
    </citation>
    <scope>X-RAY CRYSTALLOGRAPHY (2.52 ANGSTROMS)</scope>
</reference>
<accession>P05046</accession>
<dbReference type="EMBL" id="K00821">
    <property type="protein sequence ID" value="AAA33983.1"/>
    <property type="molecule type" value="Genomic_DNA"/>
</dbReference>
<dbReference type="PIR" id="S27365">
    <property type="entry name" value="S27365"/>
</dbReference>
<dbReference type="RefSeq" id="NP_001341753.1">
    <property type="nucleotide sequence ID" value="NM_001354824.1"/>
</dbReference>
<dbReference type="RefSeq" id="XP_003518800.1">
    <property type="nucleotide sequence ID" value="XM_003518752.3"/>
</dbReference>
<dbReference type="PDB" id="1G9F">
    <property type="method" value="X-ray"/>
    <property type="resolution" value="2.50 A"/>
    <property type="chains" value="A=33-285"/>
</dbReference>
<dbReference type="PDB" id="1SBD">
    <property type="method" value="X-ray"/>
    <property type="resolution" value="2.52 A"/>
    <property type="chains" value="A=33-285"/>
</dbReference>
<dbReference type="PDB" id="1SBE">
    <property type="method" value="X-ray"/>
    <property type="resolution" value="2.80 A"/>
    <property type="chains" value="A=33-285"/>
</dbReference>
<dbReference type="PDB" id="1SBF">
    <property type="method" value="X-ray"/>
    <property type="resolution" value="2.43 A"/>
    <property type="chains" value="A=33-285"/>
</dbReference>
<dbReference type="PDB" id="2SBA">
    <property type="method" value="X-ray"/>
    <property type="resolution" value="2.60 A"/>
    <property type="chains" value="A=33-285"/>
</dbReference>
<dbReference type="PDB" id="4D69">
    <property type="method" value="X-ray"/>
    <property type="resolution" value="2.70 A"/>
    <property type="chains" value="A/B/C/D/E/F/G/H/I/J/K/L=33-285"/>
</dbReference>
<dbReference type="PDBsum" id="1G9F"/>
<dbReference type="PDBsum" id="1SBD"/>
<dbReference type="PDBsum" id="1SBE"/>
<dbReference type="PDBsum" id="1SBF"/>
<dbReference type="PDBsum" id="2SBA"/>
<dbReference type="PDBsum" id="4D69"/>
<dbReference type="EMDB" id="EMD-60192"/>
<dbReference type="SMR" id="P05046"/>
<dbReference type="FunCoup" id="P05046">
    <property type="interactions" value="193"/>
</dbReference>
<dbReference type="IntAct" id="P05046">
    <property type="interactions" value="1"/>
</dbReference>
<dbReference type="STRING" id="3847.P05046"/>
<dbReference type="ChEMBL" id="CHEMBL1649056"/>
<dbReference type="Allergome" id="1429">
    <property type="allergen name" value="Gly m Agglutinin"/>
</dbReference>
<dbReference type="UniLectin" id="P05046"/>
<dbReference type="GlyConnect" id="333">
    <property type="glycosylation" value="5 N-Linked glycans"/>
</dbReference>
<dbReference type="GlyCosmos" id="P05046">
    <property type="glycosylation" value="1 site, 6 glycans"/>
</dbReference>
<dbReference type="PaxDb" id="3847-GLYMA02G01590.1"/>
<dbReference type="EnsemblPlants" id="KRH69220">
    <property type="protein sequence ID" value="KRH69220"/>
    <property type="gene ID" value="GLYMA_02G012600"/>
</dbReference>
<dbReference type="GeneID" id="100818710"/>
<dbReference type="Gramene" id="KRH69220">
    <property type="protein sequence ID" value="KRH69220"/>
    <property type="gene ID" value="GLYMA_02G012600"/>
</dbReference>
<dbReference type="eggNOG" id="ENOG502QTX3">
    <property type="taxonomic scope" value="Eukaryota"/>
</dbReference>
<dbReference type="HOGENOM" id="CLU_000288_62_2_1"/>
<dbReference type="InParanoid" id="P05046"/>
<dbReference type="OMA" id="YNESHDI"/>
<dbReference type="OrthoDB" id="2014373at2759"/>
<dbReference type="EvolutionaryTrace" id="P05046"/>
<dbReference type="PRO" id="PR:P05046"/>
<dbReference type="Proteomes" id="UP000008827">
    <property type="component" value="Chromosome 2"/>
</dbReference>
<dbReference type="GO" id="GO:0030246">
    <property type="term" value="F:carbohydrate binding"/>
    <property type="evidence" value="ECO:0007669"/>
    <property type="project" value="UniProtKB-KW"/>
</dbReference>
<dbReference type="CDD" id="cd06899">
    <property type="entry name" value="lectin_legume_LecRK_Arcelin_ConA"/>
    <property type="match status" value="1"/>
</dbReference>
<dbReference type="Gene3D" id="2.60.120.200">
    <property type="match status" value="1"/>
</dbReference>
<dbReference type="InterPro" id="IPR013320">
    <property type="entry name" value="ConA-like_dom_sf"/>
</dbReference>
<dbReference type="InterPro" id="IPR016363">
    <property type="entry name" value="L-lectin"/>
</dbReference>
<dbReference type="InterPro" id="IPR000985">
    <property type="entry name" value="Lectin_LegA_CS"/>
</dbReference>
<dbReference type="InterPro" id="IPR019825">
    <property type="entry name" value="Lectin_legB_Mn/Ca_BS"/>
</dbReference>
<dbReference type="InterPro" id="IPR001220">
    <property type="entry name" value="Legume_lectin_dom"/>
</dbReference>
<dbReference type="InterPro" id="IPR050258">
    <property type="entry name" value="Leguminous_Lectin"/>
</dbReference>
<dbReference type="PANTHER" id="PTHR32401">
    <property type="entry name" value="CONCANAVALIN A-LIKE LECTIN FAMILY PROTEIN"/>
    <property type="match status" value="1"/>
</dbReference>
<dbReference type="PANTHER" id="PTHR32401:SF45">
    <property type="entry name" value="LECTIN"/>
    <property type="match status" value="1"/>
</dbReference>
<dbReference type="Pfam" id="PF00139">
    <property type="entry name" value="Lectin_legB"/>
    <property type="match status" value="1"/>
</dbReference>
<dbReference type="PIRSF" id="PIRSF002690">
    <property type="entry name" value="L-type_lectin_plant"/>
    <property type="match status" value="1"/>
</dbReference>
<dbReference type="SUPFAM" id="SSF49899">
    <property type="entry name" value="Concanavalin A-like lectins/glucanases"/>
    <property type="match status" value="1"/>
</dbReference>
<dbReference type="PROSITE" id="PS00308">
    <property type="entry name" value="LECTIN_LEGUME_ALPHA"/>
    <property type="match status" value="1"/>
</dbReference>
<dbReference type="PROSITE" id="PS00307">
    <property type="entry name" value="LECTIN_LEGUME_BETA"/>
    <property type="match status" value="1"/>
</dbReference>
<comment type="function">
    <text>Binds GalNAc and galactose.</text>
</comment>
<comment type="subunit">
    <text>Homotetramer.</text>
</comment>
<comment type="similarity">
    <text evidence="1">Belongs to the leguminous lectin family.</text>
</comment>
<sequence length="285" mass="30928">MATSKLKTQNVVVSLSLTLTLVLVLLTSKANSAETVSFSWNKFVPKQPNMILQGDAIVTSSGKLQLNKVDENGTPKPSSLGRALYSTPIHIWDKETGSVASFAASFNFTFYAPDTKRLADGLAFFLAPIDTKPQTHAGYLGLFNENESGDQVVAVEFDTFRNSWDPPNPHIGINVNSIRSIKTTSWDLANNKVAKVLITYDASTSLLVASLVYPSQRTSNILSDVVDLKTSLPEWVRIGFSAATGLDIPGESHDVLSWSFASNLPHASSNIDPLDLTSFVLHEAI</sequence>
<protein>
    <recommendedName>
        <fullName>Lectin</fullName>
    </recommendedName>
    <alternativeName>
        <fullName>Agglutinin</fullName>
    </alternativeName>
    <alternativeName>
        <fullName>SBA</fullName>
    </alternativeName>
</protein>
<feature type="signal peptide">
    <location>
        <begin position="1"/>
        <end position="32"/>
    </location>
</feature>
<feature type="chain" id="PRO_0000017647" description="Lectin">
    <location>
        <begin position="33"/>
        <end position="285"/>
    </location>
</feature>
<feature type="glycosylation site" description="N-linked (GlcNAc...) asparagine">
    <location>
        <position position="107"/>
    </location>
</feature>
<feature type="strand" evidence="5">
    <location>
        <begin position="34"/>
        <end position="42"/>
    </location>
</feature>
<feature type="strand" evidence="5">
    <location>
        <begin position="50"/>
        <end position="54"/>
    </location>
</feature>
<feature type="strand" evidence="6">
    <location>
        <begin position="60"/>
        <end position="62"/>
    </location>
</feature>
<feature type="strand" evidence="3">
    <location>
        <begin position="71"/>
        <end position="73"/>
    </location>
</feature>
<feature type="strand" evidence="5">
    <location>
        <begin position="80"/>
        <end position="87"/>
    </location>
</feature>
<feature type="turn" evidence="5">
    <location>
        <begin position="94"/>
        <end position="96"/>
    </location>
</feature>
<feature type="strand" evidence="5">
    <location>
        <begin position="101"/>
        <end position="111"/>
    </location>
</feature>
<feature type="turn" evidence="4">
    <location>
        <begin position="113"/>
        <end position="116"/>
    </location>
</feature>
<feature type="strand" evidence="5">
    <location>
        <begin position="120"/>
        <end position="128"/>
    </location>
</feature>
<feature type="helix" evidence="5">
    <location>
        <begin position="137"/>
        <end position="139"/>
    </location>
</feature>
<feature type="turn" evidence="5">
    <location>
        <begin position="140"/>
        <end position="142"/>
    </location>
</feature>
<feature type="strand" evidence="7">
    <location>
        <begin position="145"/>
        <end position="147"/>
    </location>
</feature>
<feature type="strand" evidence="5">
    <location>
        <begin position="153"/>
        <end position="158"/>
    </location>
</feature>
<feature type="strand" evidence="5">
    <location>
        <begin position="167"/>
        <end position="179"/>
    </location>
</feature>
<feature type="strand" evidence="5">
    <location>
        <begin position="181"/>
        <end position="185"/>
    </location>
</feature>
<feature type="strand" evidence="5">
    <location>
        <begin position="194"/>
        <end position="200"/>
    </location>
</feature>
<feature type="turn" evidence="5">
    <location>
        <begin position="202"/>
        <end position="204"/>
    </location>
</feature>
<feature type="strand" evidence="5">
    <location>
        <begin position="206"/>
        <end position="213"/>
    </location>
</feature>
<feature type="turn" evidence="5">
    <location>
        <begin position="214"/>
        <end position="217"/>
    </location>
</feature>
<feature type="strand" evidence="5">
    <location>
        <begin position="218"/>
        <end position="225"/>
    </location>
</feature>
<feature type="helix" evidence="5">
    <location>
        <begin position="228"/>
        <end position="231"/>
    </location>
</feature>
<feature type="strand" evidence="5">
    <location>
        <begin position="234"/>
        <end position="244"/>
    </location>
</feature>
<feature type="strand" evidence="5">
    <location>
        <begin position="246"/>
        <end position="248"/>
    </location>
</feature>
<feature type="strand" evidence="5">
    <location>
        <begin position="252"/>
        <end position="264"/>
    </location>
</feature>
<feature type="helix" evidence="2">
    <location>
        <begin position="277"/>
        <end position="281"/>
    </location>
</feature>
<keyword id="KW-0002">3D-structure</keyword>
<keyword id="KW-0325">Glycoprotein</keyword>
<keyword id="KW-0430">Lectin</keyword>
<keyword id="KW-1185">Reference proteome</keyword>
<keyword id="KW-0732">Signal</keyword>
<proteinExistence type="evidence at protein level"/>
<name>LEC_SOYBN</name>
<evidence type="ECO:0000305" key="1"/>
<evidence type="ECO:0007829" key="2">
    <source>
        <dbReference type="PDB" id="1G9F"/>
    </source>
</evidence>
<evidence type="ECO:0007829" key="3">
    <source>
        <dbReference type="PDB" id="1SBD"/>
    </source>
</evidence>
<evidence type="ECO:0007829" key="4">
    <source>
        <dbReference type="PDB" id="1SBE"/>
    </source>
</evidence>
<evidence type="ECO:0007829" key="5">
    <source>
        <dbReference type="PDB" id="1SBF"/>
    </source>
</evidence>
<evidence type="ECO:0007829" key="6">
    <source>
        <dbReference type="PDB" id="2SBA"/>
    </source>
</evidence>
<evidence type="ECO:0007829" key="7">
    <source>
        <dbReference type="PDB" id="4D69"/>
    </source>
</evidence>
<organism>
    <name type="scientific">Glycine max</name>
    <name type="common">Soybean</name>
    <name type="synonym">Glycine hispida</name>
    <dbReference type="NCBI Taxonomy" id="3847"/>
    <lineage>
        <taxon>Eukaryota</taxon>
        <taxon>Viridiplantae</taxon>
        <taxon>Streptophyta</taxon>
        <taxon>Embryophyta</taxon>
        <taxon>Tracheophyta</taxon>
        <taxon>Spermatophyta</taxon>
        <taxon>Magnoliopsida</taxon>
        <taxon>eudicotyledons</taxon>
        <taxon>Gunneridae</taxon>
        <taxon>Pentapetalae</taxon>
        <taxon>rosids</taxon>
        <taxon>fabids</taxon>
        <taxon>Fabales</taxon>
        <taxon>Fabaceae</taxon>
        <taxon>Papilionoideae</taxon>
        <taxon>50 kb inversion clade</taxon>
        <taxon>NPAAA clade</taxon>
        <taxon>indigoferoid/millettioid clade</taxon>
        <taxon>Phaseoleae</taxon>
        <taxon>Glycine</taxon>
        <taxon>Glycine subgen. Soja</taxon>
    </lineage>
</organism>
<gene>
    <name type="primary">LE1</name>
</gene>